<organism>
    <name type="scientific">Aphonopelma sp.</name>
    <name type="common">American tarantula</name>
    <dbReference type="NCBI Taxonomy" id="29932"/>
    <lineage>
        <taxon>Eukaryota</taxon>
        <taxon>Metazoa</taxon>
        <taxon>Ecdysozoa</taxon>
        <taxon>Arthropoda</taxon>
        <taxon>Chelicerata</taxon>
        <taxon>Arachnida</taxon>
        <taxon>Araneae</taxon>
        <taxon>Mygalomorphae</taxon>
        <taxon>Theraphosidae</taxon>
        <taxon>Aphonopelma</taxon>
    </lineage>
</organism>
<reference key="1">
    <citation type="journal article" date="2000" name="J. Biol. Chem.">
        <title>Complete sequence of the 24-mer hemocyanin of the tarantula Eurypelma californicum. Structure and intramolecular evolution of the subunits.</title>
        <authorList>
            <person name="Voit R."/>
            <person name="Feldmaier-Fuchs G."/>
            <person name="Schweikardt T."/>
            <person name="Decker H."/>
            <person name="Burmester T."/>
        </authorList>
    </citation>
    <scope>NUCLEOTIDE SEQUENCE [MRNA]</scope>
    <source>
        <tissue>Heart</tissue>
    </source>
</reference>
<gene>
    <name type="primary">HCC</name>
</gene>
<name>HCYC_APHSP</name>
<feature type="initiator methionine" description="Removed" evidence="1">
    <location>
        <position position="1"/>
    </location>
</feature>
<feature type="chain" id="PRO_0000204267" description="Hemocyanin C chain">
    <location>
        <begin position="2"/>
        <end position="629"/>
    </location>
</feature>
<feature type="binding site" evidence="1">
    <location>
        <position position="175"/>
    </location>
    <ligand>
        <name>Cu cation</name>
        <dbReference type="ChEBI" id="CHEBI:23378"/>
        <label>1</label>
    </ligand>
</feature>
<feature type="binding site" evidence="1">
    <location>
        <position position="179"/>
    </location>
    <ligand>
        <name>Cu cation</name>
        <dbReference type="ChEBI" id="CHEBI:23378"/>
        <label>1</label>
    </ligand>
</feature>
<feature type="binding site" evidence="1">
    <location>
        <position position="206"/>
    </location>
    <ligand>
        <name>Cu cation</name>
        <dbReference type="ChEBI" id="CHEBI:23378"/>
        <label>1</label>
    </ligand>
</feature>
<feature type="binding site" evidence="1">
    <location>
        <position position="326"/>
    </location>
    <ligand>
        <name>Cu cation</name>
        <dbReference type="ChEBI" id="CHEBI:23378"/>
        <label>2</label>
    </ligand>
</feature>
<feature type="binding site" evidence="1">
    <location>
        <position position="330"/>
    </location>
    <ligand>
        <name>Cu cation</name>
        <dbReference type="ChEBI" id="CHEBI:23378"/>
        <label>2</label>
    </ligand>
</feature>
<feature type="binding site" evidence="1">
    <location>
        <position position="366"/>
    </location>
    <ligand>
        <name>Cu cation</name>
        <dbReference type="ChEBI" id="CHEBI:23378"/>
        <label>2</label>
    </ligand>
</feature>
<feature type="glycosylation site" description="N-linked (GlcNAc...) asparagine" evidence="2">
    <location>
        <position position="451"/>
    </location>
</feature>
<feature type="glycosylation site" description="N-linked (GlcNAc...) asparagine" evidence="2">
    <location>
        <position position="618"/>
    </location>
</feature>
<feature type="disulfide bond" evidence="1">
    <location>
        <begin position="537"/>
        <end position="585"/>
    </location>
</feature>
<protein>
    <recommendedName>
        <fullName>Hemocyanin C chain</fullName>
        <shortName>HcC</shortName>
    </recommendedName>
</protein>
<keyword id="KW-0186">Copper</keyword>
<keyword id="KW-1015">Disulfide bond</keyword>
<keyword id="KW-0325">Glycoprotein</keyword>
<keyword id="KW-0479">Metal-binding</keyword>
<keyword id="KW-0561">Oxygen transport</keyword>
<keyword id="KW-0964">Secreted</keyword>
<keyword id="KW-0813">Transport</keyword>
<sequence>MPSDANEMQARLLQLFEHSTLSTKAKFGLRVIRDPKLAGIGILGRGKIFSCFHEDHLEEASRLAEVLVGAETFDEFIDLCHQCRDFVNEALFVYSLSVAILHRPDCHGISLPPIQEIFPDKFVPVETIYKAFKEATRHADKTDDIIVDMEATGTIMDPEYNLAYYREDIGINAHHWHWHVVYPSAWDSVKMHMRKDRKGELFFYMHQQMCARYDCERLSNGLARMIPFHNFHEPLEGYNPHLSSTQNGLPYAFRPEPMTLCDMHDVSVQDLERWRERILDAINLGEVTDPNGDEYALDETFGIDVLGAIIESSRDSKNRESYGSLHNWGHVLMANIVDPDGKYQTNPGVMDDTATSLRDPIFYRWHRFIDDMFQEFKRKLKPYTKDQLSFTGVEIKNVKVHAHEENVITTTFVEDLLEISNAFNFGRTGAVKVRYQHLDHEPFVYDIEVENHSARLRHGTCRIFLAPVHDELQNQLTPEELRRLMIELDRFRVELKPGVNHNHRHSRDSSVTISKQPKFDELLKGKGTNNANEYCSCGWPDHLLVPKGNDRGMPFHLCVMITDYLYDLVGDYGYDTPCVDAVSYCGAKDSLYPDRRAMGFPFDRPIPEGHASNLHQPNVSFSQIKIQHH</sequence>
<evidence type="ECO:0000250" key="1"/>
<evidence type="ECO:0000255" key="2"/>
<evidence type="ECO:0000305" key="3"/>
<comment type="function">
    <text>Hemocyanins are copper-containing oxygen carriers occurring freely dissolved in the hemolymph of many mollusks and arthropods.</text>
</comment>
<comment type="subunit">
    <text>Tarantula hemocyanin is a 24-chain polymer with seven different chains identified.</text>
</comment>
<comment type="subcellular location">
    <subcellularLocation>
        <location>Secreted</location>
        <location>Extracellular space</location>
    </subcellularLocation>
</comment>
<comment type="tissue specificity">
    <text>Hemolymph.</text>
</comment>
<comment type="miscellaneous">
    <text>The two copper ions bound each have 3 nitrogen ligands (presumably contributed by His residues) and share a bridging ligand (possibly contributed by a Tyr residue) in addition to binding oxygen.</text>
</comment>
<comment type="similarity">
    <text evidence="3">Belongs to the tyrosinase family. Hemocyanin subfamily.</text>
</comment>
<proteinExistence type="evidence at transcript level"/>
<accession>Q9NFL6</accession>
<dbReference type="EMBL" id="AJ277489">
    <property type="protein sequence ID" value="CAB89495.1"/>
    <property type="molecule type" value="mRNA"/>
</dbReference>
<dbReference type="SMR" id="Q9NFL6"/>
<dbReference type="GlyCosmos" id="Q9NFL6">
    <property type="glycosylation" value="2 sites, No reported glycans"/>
</dbReference>
<dbReference type="GO" id="GO:0005576">
    <property type="term" value="C:extracellular region"/>
    <property type="evidence" value="ECO:0007669"/>
    <property type="project" value="UniProtKB-SubCell"/>
</dbReference>
<dbReference type="GO" id="GO:0031404">
    <property type="term" value="F:chloride ion binding"/>
    <property type="evidence" value="ECO:0000250"/>
    <property type="project" value="UniProtKB"/>
</dbReference>
<dbReference type="GO" id="GO:0005507">
    <property type="term" value="F:copper ion binding"/>
    <property type="evidence" value="ECO:0000250"/>
    <property type="project" value="UniProtKB"/>
</dbReference>
<dbReference type="GO" id="GO:0016491">
    <property type="term" value="F:oxidoreductase activity"/>
    <property type="evidence" value="ECO:0007669"/>
    <property type="project" value="InterPro"/>
</dbReference>
<dbReference type="GO" id="GO:0005344">
    <property type="term" value="F:oxygen carrier activity"/>
    <property type="evidence" value="ECO:0007669"/>
    <property type="project" value="UniProtKB-KW"/>
</dbReference>
<dbReference type="FunFam" id="1.10.1280.10:FF:000004">
    <property type="entry name" value="Hemocyanin subunit 2"/>
    <property type="match status" value="1"/>
</dbReference>
<dbReference type="FunFam" id="2.60.40.1520:FF:000001">
    <property type="entry name" value="Hemocyanin subunit 2"/>
    <property type="match status" value="1"/>
</dbReference>
<dbReference type="FunFam" id="1.20.1370.10:FF:000002">
    <property type="entry name" value="Hemocyanin subunit B"/>
    <property type="match status" value="1"/>
</dbReference>
<dbReference type="Gene3D" id="1.10.1280.10">
    <property type="entry name" value="Di-copper center containing domain from catechol oxidase"/>
    <property type="match status" value="1"/>
</dbReference>
<dbReference type="Gene3D" id="2.60.40.1520">
    <property type="entry name" value="Hemocyanin, C-terminal domain"/>
    <property type="match status" value="1"/>
</dbReference>
<dbReference type="Gene3D" id="1.20.1370.10">
    <property type="entry name" value="Hemocyanin, N-terminal domain"/>
    <property type="match status" value="1"/>
</dbReference>
<dbReference type="InterPro" id="IPR008922">
    <property type="entry name" value="Di-copper_centre_dom_sf"/>
</dbReference>
<dbReference type="InterPro" id="IPR013788">
    <property type="entry name" value="Hemocyanin/hexamerin"/>
</dbReference>
<dbReference type="InterPro" id="IPR000896">
    <property type="entry name" value="Hemocyanin/hexamerin_mid_dom"/>
</dbReference>
<dbReference type="InterPro" id="IPR005203">
    <property type="entry name" value="Hemocyanin_C"/>
</dbReference>
<dbReference type="InterPro" id="IPR037020">
    <property type="entry name" value="Hemocyanin_C_sf"/>
</dbReference>
<dbReference type="InterPro" id="IPR005204">
    <property type="entry name" value="Hemocyanin_N"/>
</dbReference>
<dbReference type="InterPro" id="IPR036697">
    <property type="entry name" value="Hemocyanin_N_sf"/>
</dbReference>
<dbReference type="InterPro" id="IPR014756">
    <property type="entry name" value="Ig_E-set"/>
</dbReference>
<dbReference type="InterPro" id="IPR002227">
    <property type="entry name" value="Tyrosinase_Cu-bd"/>
</dbReference>
<dbReference type="PANTHER" id="PTHR11511">
    <property type="entry name" value="LARVAL STORAGE PROTEIN/PHENOLOXIDASE"/>
    <property type="match status" value="1"/>
</dbReference>
<dbReference type="PANTHER" id="PTHR11511:SF4">
    <property type="entry name" value="PHENOLOXIDASE 2-RELATED"/>
    <property type="match status" value="1"/>
</dbReference>
<dbReference type="Pfam" id="PF03723">
    <property type="entry name" value="Hemocyanin_C"/>
    <property type="match status" value="1"/>
</dbReference>
<dbReference type="Pfam" id="PF00372">
    <property type="entry name" value="Hemocyanin_M"/>
    <property type="match status" value="1"/>
</dbReference>
<dbReference type="Pfam" id="PF03722">
    <property type="entry name" value="Hemocyanin_N"/>
    <property type="match status" value="1"/>
</dbReference>
<dbReference type="PRINTS" id="PR00187">
    <property type="entry name" value="HAEMOCYANIN"/>
</dbReference>
<dbReference type="SUPFAM" id="SSF48056">
    <property type="entry name" value="Di-copper centre-containing domain"/>
    <property type="match status" value="1"/>
</dbReference>
<dbReference type="SUPFAM" id="SSF81296">
    <property type="entry name" value="E set domains"/>
    <property type="match status" value="1"/>
</dbReference>
<dbReference type="SUPFAM" id="SSF48050">
    <property type="entry name" value="Hemocyanin, N-terminal domain"/>
    <property type="match status" value="1"/>
</dbReference>
<dbReference type="PROSITE" id="PS00209">
    <property type="entry name" value="HEMOCYANIN_1"/>
    <property type="match status" value="1"/>
</dbReference>
<dbReference type="PROSITE" id="PS00210">
    <property type="entry name" value="HEMOCYANIN_2"/>
    <property type="match status" value="1"/>
</dbReference>
<dbReference type="PROSITE" id="PS00498">
    <property type="entry name" value="TYROSINASE_2"/>
    <property type="match status" value="1"/>
</dbReference>